<gene>
    <name type="ordered locus">ECU09_1950</name>
</gene>
<name>Y9J5_ENCCU</name>
<comment type="subcellular location">
    <subcellularLocation>
        <location evidence="3">Membrane</location>
        <topology evidence="3">Multi-pass membrane protein</topology>
    </subcellularLocation>
</comment>
<comment type="developmental stage">
    <text evidence="2">Expressed in late sporogonial stages.</text>
</comment>
<comment type="similarity">
    <text evidence="3">Belongs to the DP1 family.</text>
</comment>
<evidence type="ECO:0000255" key="1"/>
<evidence type="ECO:0000269" key="2">
    <source>
    </source>
</evidence>
<evidence type="ECO:0000305" key="3"/>
<protein>
    <recommendedName>
        <fullName>Uncharacterized membrane protein ECU09_1950</fullName>
    </recommendedName>
</protein>
<organism>
    <name type="scientific">Encephalitozoon cuniculi (strain GB-M1)</name>
    <name type="common">Microsporidian parasite</name>
    <dbReference type="NCBI Taxonomy" id="284813"/>
    <lineage>
        <taxon>Eukaryota</taxon>
        <taxon>Fungi</taxon>
        <taxon>Fungi incertae sedis</taxon>
        <taxon>Microsporidia</taxon>
        <taxon>Unikaryonidae</taxon>
        <taxon>Encephalitozoon</taxon>
    </lineage>
</organism>
<keyword id="KW-0472">Membrane</keyword>
<keyword id="KW-1185">Reference proteome</keyword>
<keyword id="KW-0812">Transmembrane</keyword>
<keyword id="KW-1133">Transmembrane helix</keyword>
<proteinExistence type="evidence at protein level"/>
<accession>Q8STK5</accession>
<reference key="1">
    <citation type="journal article" date="2001" name="Nature">
        <title>Genome sequence and gene compaction of the eukaryote parasite Encephalitozoon cuniculi.</title>
        <authorList>
            <person name="Katinka M.D."/>
            <person name="Duprat S."/>
            <person name="Cornillot E."/>
            <person name="Metenier G."/>
            <person name="Thomarat F."/>
            <person name="Prensier G."/>
            <person name="Barbe V."/>
            <person name="Peyretaillade E."/>
            <person name="Brottier P."/>
            <person name="Wincker P."/>
            <person name="Delbac F."/>
            <person name="El Alaoui H."/>
            <person name="Peyret P."/>
            <person name="Saurin W."/>
            <person name="Gouy M."/>
            <person name="Weissenbach J."/>
            <person name="Vivares C.P."/>
        </authorList>
    </citation>
    <scope>NUCLEOTIDE SEQUENCE [LARGE SCALE GENOMIC DNA]</scope>
    <source>
        <strain>GB-M1</strain>
    </source>
</reference>
<reference key="2">
    <citation type="journal article" date="2006" name="Proteomics">
        <title>Proteomic analysis of the eukaryotic parasite Encephalitozoon cuniculi (microsporidia): a reference map for proteins expressed in late sporogonial stages.</title>
        <authorList>
            <person name="Brosson D."/>
            <person name="Kuhn L."/>
            <person name="Delbac F."/>
            <person name="Garin J."/>
            <person name="Vivares C.P."/>
            <person name="Texier C."/>
        </authorList>
    </citation>
    <scope>IDENTIFICATION BY MASS SPECTROMETRY [LARGE SCALE ANALYSIS]</scope>
    <scope>DEVELOPMENTAL STAGE</scope>
    <scope>SUBCELLULAR LOCATION</scope>
</reference>
<feature type="chain" id="PRO_0000383330" description="Uncharacterized membrane protein ECU09_1950">
    <location>
        <begin position="1"/>
        <end position="179"/>
    </location>
</feature>
<feature type="transmembrane region" description="Helical" evidence="1">
    <location>
        <begin position="29"/>
        <end position="49"/>
    </location>
</feature>
<feature type="transmembrane region" description="Helical" evidence="1">
    <location>
        <begin position="76"/>
        <end position="96"/>
    </location>
</feature>
<feature type="transmembrane region" description="Helical" evidence="1">
    <location>
        <begin position="97"/>
        <end position="117"/>
    </location>
</feature>
<dbReference type="EMBL" id="AL590451">
    <property type="protein sequence ID" value="CAD27168.1"/>
    <property type="molecule type" value="Genomic_DNA"/>
</dbReference>
<dbReference type="RefSeq" id="NP_001402449.1">
    <property type="nucleotide sequence ID" value="NM_001415516.1"/>
</dbReference>
<dbReference type="RefSeq" id="XP_955749.1">
    <property type="nucleotide sequence ID" value="XM_950656.1"/>
</dbReference>
<dbReference type="FunCoup" id="Q8STK5">
    <property type="interactions" value="24"/>
</dbReference>
<dbReference type="STRING" id="284813.Q8STK5"/>
<dbReference type="GeneID" id="860537"/>
<dbReference type="VEuPathDB" id="MicrosporidiaDB:ECU09_1950"/>
<dbReference type="HOGENOM" id="CLU_133395_0_0_1"/>
<dbReference type="InParanoid" id="Q8STK5"/>
<dbReference type="OMA" id="CMIPGPW"/>
<dbReference type="OrthoDB" id="10009287at2759"/>
<dbReference type="Proteomes" id="UP000000819">
    <property type="component" value="Chromosome IX"/>
</dbReference>
<dbReference type="GO" id="GO:0016020">
    <property type="term" value="C:membrane"/>
    <property type="evidence" value="ECO:0007669"/>
    <property type="project" value="UniProtKB-SubCell"/>
</dbReference>
<dbReference type="InterPro" id="IPR004345">
    <property type="entry name" value="TB2_DP1_HVA22"/>
</dbReference>
<dbReference type="PANTHER" id="PTHR12300">
    <property type="entry name" value="HVA22-LIKE PROTEINS"/>
    <property type="match status" value="1"/>
</dbReference>
<dbReference type="Pfam" id="PF03134">
    <property type="entry name" value="TB2_DP1_HVA22"/>
    <property type="match status" value="1"/>
</dbReference>
<sequence>MDCLRKQAEKIPILDAIEKRMNIRKEYALLGISFFCLVIIMATSLGPLITSTVGIIVPLQETLVILRQVNPKKDEAKHMLVFWMVFGILTSLDAYSGAIISFIPLWYTMKFFFLLWAGPLKFRGGIIIYDNILARIPEKWYREEGGIEHAVKKATDAVKTVAESEFNKKDVIESSKKTD</sequence>